<organism>
    <name type="scientific">Shigella flexneri</name>
    <dbReference type="NCBI Taxonomy" id="623"/>
    <lineage>
        <taxon>Bacteria</taxon>
        <taxon>Pseudomonadati</taxon>
        <taxon>Pseudomonadota</taxon>
        <taxon>Gammaproteobacteria</taxon>
        <taxon>Enterobacterales</taxon>
        <taxon>Enterobacteriaceae</taxon>
        <taxon>Shigella</taxon>
    </lineage>
</organism>
<sequence length="417" mass="45317">MLKREMNIADYDAELWQAMEQEKVRQEEHIELIASENYTSPRVMQAQGSQLTNKYAEGYPGKRYYGGCEYVDIVEQLAIDRAKELFGADYANVQPHSGSQANFAVYTALLEPGDTVLGMNLAHGGHLTHGSPVNFSGKLYNIVPYGIDATGHIDYADLEKQAKEHKPKMIIGGFSAYSGVVDWAKMREIADSIGAYLFVDMAHVAGLVAAGVYPNPVPHAHVVTTTTHKTLAGPRGGLILAKGGSEELYKKLNSAVFPGGQGGPLMHVIAGKAVALKEAMEPEFKTYQQQVAKNAKAMVEVFLERGYKVVSGGTDNHLFLVDLVDKNLTGKEADAALGRANITVNKNSVPNDPKSPFVTSGIRVGTPAITRRGFKEAEAKELAGWMCDVLDSINDEAVIERIKGKVLDICARYPVYA</sequence>
<keyword id="KW-0007">Acetylation</keyword>
<keyword id="KW-0028">Amino-acid biosynthesis</keyword>
<keyword id="KW-0963">Cytoplasm</keyword>
<keyword id="KW-0554">One-carbon metabolism</keyword>
<keyword id="KW-0663">Pyridoxal phosphate</keyword>
<keyword id="KW-1185">Reference proteome</keyword>
<keyword id="KW-0808">Transferase</keyword>
<protein>
    <recommendedName>
        <fullName evidence="1">Serine hydroxymethyltransferase</fullName>
        <shortName evidence="1">SHMT</shortName>
        <shortName evidence="1">Serine methylase</shortName>
        <ecNumber evidence="1">2.1.2.1</ecNumber>
    </recommendedName>
</protein>
<accession>P0A827</accession>
<accession>P00477</accession>
<name>GLYA_SHIFL</name>
<feature type="chain" id="PRO_0000113660" description="Serine hydroxymethyltransferase">
    <location>
        <begin position="1"/>
        <end position="417"/>
    </location>
</feature>
<feature type="binding site" evidence="1">
    <location>
        <position position="121"/>
    </location>
    <ligand>
        <name>(6S)-5,6,7,8-tetrahydrofolate</name>
        <dbReference type="ChEBI" id="CHEBI:57453"/>
    </ligand>
</feature>
<feature type="binding site" evidence="1">
    <location>
        <begin position="125"/>
        <end position="127"/>
    </location>
    <ligand>
        <name>(6S)-5,6,7,8-tetrahydrofolate</name>
        <dbReference type="ChEBI" id="CHEBI:57453"/>
    </ligand>
</feature>
<feature type="binding site" evidence="1">
    <location>
        <begin position="355"/>
        <end position="357"/>
    </location>
    <ligand>
        <name>(6S)-5,6,7,8-tetrahydrofolate</name>
        <dbReference type="ChEBI" id="CHEBI:57453"/>
    </ligand>
</feature>
<feature type="site" description="Plays an important role in substrate specificity" evidence="1">
    <location>
        <position position="228"/>
    </location>
</feature>
<feature type="modified residue" description="N6-acetyllysine" evidence="1">
    <location>
        <position position="54"/>
    </location>
</feature>
<feature type="modified residue" description="N6-(pyridoxal phosphate)lysine" evidence="1">
    <location>
        <position position="229"/>
    </location>
</feature>
<feature type="modified residue" description="N6-acetyllysine" evidence="1">
    <location>
        <position position="250"/>
    </location>
</feature>
<feature type="modified residue" description="N6-acetyllysine" evidence="1">
    <location>
        <position position="285"/>
    </location>
</feature>
<feature type="modified residue" description="N6-acetyllysine" evidence="1">
    <location>
        <position position="354"/>
    </location>
</feature>
<feature type="modified residue" description="N6-acetyllysine" evidence="1">
    <location>
        <position position="375"/>
    </location>
</feature>
<reference key="1">
    <citation type="journal article" date="2002" name="Nucleic Acids Res.">
        <title>Genome sequence of Shigella flexneri 2a: insights into pathogenicity through comparison with genomes of Escherichia coli K12 and O157.</title>
        <authorList>
            <person name="Jin Q."/>
            <person name="Yuan Z."/>
            <person name="Xu J."/>
            <person name="Wang Y."/>
            <person name="Shen Y."/>
            <person name="Lu W."/>
            <person name="Wang J."/>
            <person name="Liu H."/>
            <person name="Yang J."/>
            <person name="Yang F."/>
            <person name="Zhang X."/>
            <person name="Zhang J."/>
            <person name="Yang G."/>
            <person name="Wu H."/>
            <person name="Qu D."/>
            <person name="Dong J."/>
            <person name="Sun L."/>
            <person name="Xue Y."/>
            <person name="Zhao A."/>
            <person name="Gao Y."/>
            <person name="Zhu J."/>
            <person name="Kan B."/>
            <person name="Ding K."/>
            <person name="Chen S."/>
            <person name="Cheng H."/>
            <person name="Yao Z."/>
            <person name="He B."/>
            <person name="Chen R."/>
            <person name="Ma D."/>
            <person name="Qiang B."/>
            <person name="Wen Y."/>
            <person name="Hou Y."/>
            <person name="Yu J."/>
        </authorList>
    </citation>
    <scope>NUCLEOTIDE SEQUENCE [LARGE SCALE GENOMIC DNA]</scope>
    <source>
        <strain>301 / Serotype 2a</strain>
    </source>
</reference>
<reference key="2">
    <citation type="journal article" date="2003" name="Infect. Immun.">
        <title>Complete genome sequence and comparative genomics of Shigella flexneri serotype 2a strain 2457T.</title>
        <authorList>
            <person name="Wei J."/>
            <person name="Goldberg M.B."/>
            <person name="Burland V."/>
            <person name="Venkatesan M.M."/>
            <person name="Deng W."/>
            <person name="Fournier G."/>
            <person name="Mayhew G.F."/>
            <person name="Plunkett G. III"/>
            <person name="Rose D.J."/>
            <person name="Darling A."/>
            <person name="Mau B."/>
            <person name="Perna N.T."/>
            <person name="Payne S.M."/>
            <person name="Runyen-Janecky L.J."/>
            <person name="Zhou S."/>
            <person name="Schwartz D.C."/>
            <person name="Blattner F.R."/>
        </authorList>
    </citation>
    <scope>NUCLEOTIDE SEQUENCE [LARGE SCALE GENOMIC DNA]</scope>
    <source>
        <strain>ATCC 700930 / 2457T / Serotype 2a</strain>
    </source>
</reference>
<evidence type="ECO:0000255" key="1">
    <source>
        <dbReference type="HAMAP-Rule" id="MF_00051"/>
    </source>
</evidence>
<gene>
    <name evidence="1" type="primary">glyA</name>
    <name type="ordered locus">SF2598</name>
    <name type="ordered locus">S2770</name>
</gene>
<comment type="function">
    <text evidence="1">Catalyzes the reversible interconversion of serine and glycine with tetrahydrofolate (THF) serving as the one-carbon carrier. This reaction serves as the major source of one-carbon groups required for the biosynthesis of purines, thymidylate, methionine, and other important biomolecules. Also exhibits THF-independent aldolase activity toward beta-hydroxyamino acids, producing glycine and aldehydes, via a retro-aldol mechanism.</text>
</comment>
<comment type="catalytic activity">
    <reaction evidence="1">
        <text>(6R)-5,10-methylene-5,6,7,8-tetrahydrofolate + glycine + H2O = (6S)-5,6,7,8-tetrahydrofolate + L-serine</text>
        <dbReference type="Rhea" id="RHEA:15481"/>
        <dbReference type="ChEBI" id="CHEBI:15377"/>
        <dbReference type="ChEBI" id="CHEBI:15636"/>
        <dbReference type="ChEBI" id="CHEBI:33384"/>
        <dbReference type="ChEBI" id="CHEBI:57305"/>
        <dbReference type="ChEBI" id="CHEBI:57453"/>
        <dbReference type="EC" id="2.1.2.1"/>
    </reaction>
</comment>
<comment type="cofactor">
    <cofactor evidence="1">
        <name>pyridoxal 5'-phosphate</name>
        <dbReference type="ChEBI" id="CHEBI:597326"/>
    </cofactor>
</comment>
<comment type="pathway">
    <text evidence="1">One-carbon metabolism; tetrahydrofolate interconversion.</text>
</comment>
<comment type="pathway">
    <text evidence="1">Amino-acid biosynthesis; glycine biosynthesis; glycine from L-serine: step 1/1.</text>
</comment>
<comment type="subunit">
    <text evidence="1">Homodimer.</text>
</comment>
<comment type="subcellular location">
    <subcellularLocation>
        <location evidence="1">Cytoplasm</location>
    </subcellularLocation>
</comment>
<comment type="similarity">
    <text evidence="1">Belongs to the SHMT family.</text>
</comment>
<dbReference type="EC" id="2.1.2.1" evidence="1"/>
<dbReference type="EMBL" id="AE005674">
    <property type="protein sequence ID" value="AAN44095.2"/>
    <property type="molecule type" value="Genomic_DNA"/>
</dbReference>
<dbReference type="EMBL" id="AE014073">
    <property type="protein sequence ID" value="AAP17919.1"/>
    <property type="molecule type" value="Genomic_DNA"/>
</dbReference>
<dbReference type="RefSeq" id="NP_708388.2">
    <property type="nucleotide sequence ID" value="NC_004337.2"/>
</dbReference>
<dbReference type="RefSeq" id="WP_000919159.1">
    <property type="nucleotide sequence ID" value="NZ_WPGW01000021.1"/>
</dbReference>
<dbReference type="SMR" id="P0A827"/>
<dbReference type="STRING" id="198214.SF2598"/>
<dbReference type="DrugBank" id="DB11596">
    <property type="generic name" value="Levoleucovorin"/>
</dbReference>
<dbReference type="DrugBank" id="DB02824">
    <property type="generic name" value="N-Pyridoxyl-Glycine-5-Monophosphate"/>
</dbReference>
<dbReference type="PaxDb" id="198214-SF2598"/>
<dbReference type="GeneID" id="1025638"/>
<dbReference type="GeneID" id="89517346"/>
<dbReference type="KEGG" id="sfl:SF2598"/>
<dbReference type="KEGG" id="sfx:S2770"/>
<dbReference type="PATRIC" id="fig|198214.7.peg.3102"/>
<dbReference type="HOGENOM" id="CLU_022477_2_1_6"/>
<dbReference type="UniPathway" id="UPA00193"/>
<dbReference type="UniPathway" id="UPA00288">
    <property type="reaction ID" value="UER01023"/>
</dbReference>
<dbReference type="Proteomes" id="UP000001006">
    <property type="component" value="Chromosome"/>
</dbReference>
<dbReference type="Proteomes" id="UP000002673">
    <property type="component" value="Chromosome"/>
</dbReference>
<dbReference type="GO" id="GO:0005829">
    <property type="term" value="C:cytosol"/>
    <property type="evidence" value="ECO:0007669"/>
    <property type="project" value="TreeGrafter"/>
</dbReference>
<dbReference type="GO" id="GO:0004372">
    <property type="term" value="F:glycine hydroxymethyltransferase activity"/>
    <property type="evidence" value="ECO:0007669"/>
    <property type="project" value="UniProtKB-UniRule"/>
</dbReference>
<dbReference type="GO" id="GO:0030170">
    <property type="term" value="F:pyridoxal phosphate binding"/>
    <property type="evidence" value="ECO:0007669"/>
    <property type="project" value="UniProtKB-UniRule"/>
</dbReference>
<dbReference type="GO" id="GO:0019264">
    <property type="term" value="P:glycine biosynthetic process from serine"/>
    <property type="evidence" value="ECO:0007669"/>
    <property type="project" value="UniProtKB-UniRule"/>
</dbReference>
<dbReference type="GO" id="GO:0035999">
    <property type="term" value="P:tetrahydrofolate interconversion"/>
    <property type="evidence" value="ECO:0007669"/>
    <property type="project" value="UniProtKB-UniRule"/>
</dbReference>
<dbReference type="CDD" id="cd00378">
    <property type="entry name" value="SHMT"/>
    <property type="match status" value="1"/>
</dbReference>
<dbReference type="FunFam" id="3.40.640.10:FF:000001">
    <property type="entry name" value="Serine hydroxymethyltransferase"/>
    <property type="match status" value="1"/>
</dbReference>
<dbReference type="FunFam" id="3.90.1150.10:FF:000003">
    <property type="entry name" value="Serine hydroxymethyltransferase"/>
    <property type="match status" value="1"/>
</dbReference>
<dbReference type="Gene3D" id="3.90.1150.10">
    <property type="entry name" value="Aspartate Aminotransferase, domain 1"/>
    <property type="match status" value="1"/>
</dbReference>
<dbReference type="Gene3D" id="3.40.640.10">
    <property type="entry name" value="Type I PLP-dependent aspartate aminotransferase-like (Major domain)"/>
    <property type="match status" value="1"/>
</dbReference>
<dbReference type="HAMAP" id="MF_00051">
    <property type="entry name" value="SHMT"/>
    <property type="match status" value="1"/>
</dbReference>
<dbReference type="InterPro" id="IPR015424">
    <property type="entry name" value="PyrdxlP-dep_Trfase"/>
</dbReference>
<dbReference type="InterPro" id="IPR015421">
    <property type="entry name" value="PyrdxlP-dep_Trfase_major"/>
</dbReference>
<dbReference type="InterPro" id="IPR015422">
    <property type="entry name" value="PyrdxlP-dep_Trfase_small"/>
</dbReference>
<dbReference type="InterPro" id="IPR001085">
    <property type="entry name" value="Ser_HO-MeTrfase"/>
</dbReference>
<dbReference type="InterPro" id="IPR049943">
    <property type="entry name" value="Ser_HO-MeTrfase-like"/>
</dbReference>
<dbReference type="InterPro" id="IPR019798">
    <property type="entry name" value="Ser_HO-MeTrfase_PLP_BS"/>
</dbReference>
<dbReference type="InterPro" id="IPR039429">
    <property type="entry name" value="SHMT-like_dom"/>
</dbReference>
<dbReference type="NCBIfam" id="NF000586">
    <property type="entry name" value="PRK00011.1"/>
    <property type="match status" value="1"/>
</dbReference>
<dbReference type="PANTHER" id="PTHR11680">
    <property type="entry name" value="SERINE HYDROXYMETHYLTRANSFERASE"/>
    <property type="match status" value="1"/>
</dbReference>
<dbReference type="PANTHER" id="PTHR11680:SF50">
    <property type="entry name" value="SERINE HYDROXYMETHYLTRANSFERASE"/>
    <property type="match status" value="1"/>
</dbReference>
<dbReference type="Pfam" id="PF00464">
    <property type="entry name" value="SHMT"/>
    <property type="match status" value="1"/>
</dbReference>
<dbReference type="PIRSF" id="PIRSF000412">
    <property type="entry name" value="SHMT"/>
    <property type="match status" value="1"/>
</dbReference>
<dbReference type="SUPFAM" id="SSF53383">
    <property type="entry name" value="PLP-dependent transferases"/>
    <property type="match status" value="1"/>
</dbReference>
<dbReference type="PROSITE" id="PS00096">
    <property type="entry name" value="SHMT"/>
    <property type="match status" value="1"/>
</dbReference>
<proteinExistence type="inferred from homology"/>